<proteinExistence type="inferred from homology"/>
<sequence>MTETPLLSVRGLAKHYQTRSATLKILDNVSFDIARGEVVGLVGESGSGKTTIGRSVLRLIEPTAGQIMFDGADVATLSAREMRRQRRRMQYIFQDPFASLSPRMTIGEILMEGLNIQGIGTKAERLERARKALEQVELPPDTINRYAHEFSGGQRQRIGIARALTLEPDFIVADEPVSALDVSIQAQVVNLLRDLQQRLGLTMLFISHDLAVVEYICDRVIVLYLGRIMEIASSEDLYARPQHPYTRALLSAIPSPDPDARTERQILRGDIPSPANPPSGCVFRTRCPMAIDACATTVPQLREVRPGHFKACIRDNI</sequence>
<feature type="chain" id="PRO_0000328698" description="Putative peptide import ATP-binding protein BMEII0864">
    <location>
        <begin position="1"/>
        <end position="317"/>
    </location>
</feature>
<feature type="domain" description="ABC transporter" evidence="2">
    <location>
        <begin position="7"/>
        <end position="250"/>
    </location>
</feature>
<feature type="binding site" evidence="2">
    <location>
        <begin position="43"/>
        <end position="50"/>
    </location>
    <ligand>
        <name>ATP</name>
        <dbReference type="ChEBI" id="CHEBI:30616"/>
    </ligand>
</feature>
<reference key="1">
    <citation type="journal article" date="2002" name="Proc. Natl. Acad. Sci. U.S.A.">
        <title>The genome sequence of the facultative intracellular pathogen Brucella melitensis.</title>
        <authorList>
            <person name="DelVecchio V.G."/>
            <person name="Kapatral V."/>
            <person name="Redkar R.J."/>
            <person name="Patra G."/>
            <person name="Mujer C."/>
            <person name="Los T."/>
            <person name="Ivanova N."/>
            <person name="Anderson I."/>
            <person name="Bhattacharyya A."/>
            <person name="Lykidis A."/>
            <person name="Reznik G."/>
            <person name="Jablonski L."/>
            <person name="Larsen N."/>
            <person name="D'Souza M."/>
            <person name="Bernal A."/>
            <person name="Mazur M."/>
            <person name="Goltsman E."/>
            <person name="Selkov E."/>
            <person name="Elzer P.H."/>
            <person name="Hagius S."/>
            <person name="O'Callaghan D."/>
            <person name="Letesson J.-J."/>
            <person name="Haselkorn R."/>
            <person name="Kyrpides N.C."/>
            <person name="Overbeek R."/>
        </authorList>
    </citation>
    <scope>NUCLEOTIDE SEQUENCE [LARGE SCALE GENOMIC DNA]</scope>
    <source>
        <strain>ATCC 23456 / CCUG 17765 / NCTC 10094 / 16M</strain>
    </source>
</reference>
<comment type="function">
    <text evidence="1">Probably part of an ABC transporter complex that could be involved in peptide import. Probably responsible for energy coupling to the transport system (By similarity).</text>
</comment>
<comment type="subunit">
    <text evidence="3">The complex is composed of two ATP-binding proteins (BMEII0863 and BMEII0864), two transmembrane proteins (BMEII0860 and BMEII0861) and a solute-binding protein (BMEII0859).</text>
</comment>
<comment type="subcellular location">
    <subcellularLocation>
        <location evidence="3">Cell inner membrane</location>
        <topology evidence="3">Peripheral membrane protein</topology>
    </subcellularLocation>
</comment>
<comment type="similarity">
    <text evidence="3">Belongs to the ABC transporter superfamily.</text>
</comment>
<comment type="sequence caution" evidence="3">
    <conflict type="erroneous initiation">
        <sequence resource="EMBL-CDS" id="AAL54106"/>
    </conflict>
</comment>
<name>Y3864_BRUME</name>
<gene>
    <name type="ordered locus">BMEII0864</name>
</gene>
<organism>
    <name type="scientific">Brucella melitensis biotype 1 (strain ATCC 23456 / CCUG 17765 / NCTC 10094 / 16M)</name>
    <dbReference type="NCBI Taxonomy" id="224914"/>
    <lineage>
        <taxon>Bacteria</taxon>
        <taxon>Pseudomonadati</taxon>
        <taxon>Pseudomonadota</taxon>
        <taxon>Alphaproteobacteria</taxon>
        <taxon>Hyphomicrobiales</taxon>
        <taxon>Brucellaceae</taxon>
        <taxon>Brucella/Ochrobactrum group</taxon>
        <taxon>Brucella</taxon>
    </lineage>
</organism>
<accession>Q8YBN5</accession>
<dbReference type="EC" id="7.4.2.-"/>
<dbReference type="EMBL" id="AE008918">
    <property type="protein sequence ID" value="AAL54106.1"/>
    <property type="status" value="ALT_INIT"/>
    <property type="molecule type" value="Genomic_DNA"/>
</dbReference>
<dbReference type="PIR" id="AG3617">
    <property type="entry name" value="AG3617"/>
</dbReference>
<dbReference type="RefSeq" id="WP_002966203.1">
    <property type="nucleotide sequence ID" value="NZ_GG703779.1"/>
</dbReference>
<dbReference type="SMR" id="Q8YBN5"/>
<dbReference type="KEGG" id="bme:BMEII0864"/>
<dbReference type="KEGG" id="bmel:DK63_2384"/>
<dbReference type="PATRIC" id="fig|224914.52.peg.2498"/>
<dbReference type="eggNOG" id="COG4608">
    <property type="taxonomic scope" value="Bacteria"/>
</dbReference>
<dbReference type="Proteomes" id="UP000000419">
    <property type="component" value="Chromosome II"/>
</dbReference>
<dbReference type="GO" id="GO:0005886">
    <property type="term" value="C:plasma membrane"/>
    <property type="evidence" value="ECO:0007669"/>
    <property type="project" value="UniProtKB-SubCell"/>
</dbReference>
<dbReference type="GO" id="GO:0005524">
    <property type="term" value="F:ATP binding"/>
    <property type="evidence" value="ECO:0007669"/>
    <property type="project" value="UniProtKB-KW"/>
</dbReference>
<dbReference type="GO" id="GO:0016887">
    <property type="term" value="F:ATP hydrolysis activity"/>
    <property type="evidence" value="ECO:0007669"/>
    <property type="project" value="InterPro"/>
</dbReference>
<dbReference type="GO" id="GO:0015833">
    <property type="term" value="P:peptide transport"/>
    <property type="evidence" value="ECO:0007669"/>
    <property type="project" value="UniProtKB-KW"/>
</dbReference>
<dbReference type="GO" id="GO:0015031">
    <property type="term" value="P:protein transport"/>
    <property type="evidence" value="ECO:0007669"/>
    <property type="project" value="UniProtKB-KW"/>
</dbReference>
<dbReference type="GO" id="GO:0055085">
    <property type="term" value="P:transmembrane transport"/>
    <property type="evidence" value="ECO:0007669"/>
    <property type="project" value="UniProtKB-ARBA"/>
</dbReference>
<dbReference type="CDD" id="cd03257">
    <property type="entry name" value="ABC_NikE_OppD_transporters"/>
    <property type="match status" value="1"/>
</dbReference>
<dbReference type="FunFam" id="3.40.50.300:FF:000016">
    <property type="entry name" value="Oligopeptide ABC transporter ATP-binding component"/>
    <property type="match status" value="1"/>
</dbReference>
<dbReference type="Gene3D" id="3.40.50.300">
    <property type="entry name" value="P-loop containing nucleotide triphosphate hydrolases"/>
    <property type="match status" value="1"/>
</dbReference>
<dbReference type="InterPro" id="IPR003593">
    <property type="entry name" value="AAA+_ATPase"/>
</dbReference>
<dbReference type="InterPro" id="IPR050319">
    <property type="entry name" value="ABC_transp_ATP-bind"/>
</dbReference>
<dbReference type="InterPro" id="IPR003439">
    <property type="entry name" value="ABC_transporter-like_ATP-bd"/>
</dbReference>
<dbReference type="InterPro" id="IPR017871">
    <property type="entry name" value="ABC_transporter-like_CS"/>
</dbReference>
<dbReference type="InterPro" id="IPR013563">
    <property type="entry name" value="Oligopep_ABC_C"/>
</dbReference>
<dbReference type="InterPro" id="IPR027417">
    <property type="entry name" value="P-loop_NTPase"/>
</dbReference>
<dbReference type="NCBIfam" id="TIGR01727">
    <property type="entry name" value="oligo_HPY"/>
    <property type="match status" value="1"/>
</dbReference>
<dbReference type="PANTHER" id="PTHR43776:SF7">
    <property type="entry name" value="D,D-DIPEPTIDE TRANSPORT ATP-BINDING PROTEIN DDPF-RELATED"/>
    <property type="match status" value="1"/>
</dbReference>
<dbReference type="PANTHER" id="PTHR43776">
    <property type="entry name" value="TRANSPORT ATP-BINDING PROTEIN"/>
    <property type="match status" value="1"/>
</dbReference>
<dbReference type="Pfam" id="PF00005">
    <property type="entry name" value="ABC_tran"/>
    <property type="match status" value="1"/>
</dbReference>
<dbReference type="Pfam" id="PF08352">
    <property type="entry name" value="oligo_HPY"/>
    <property type="match status" value="1"/>
</dbReference>
<dbReference type="SMART" id="SM00382">
    <property type="entry name" value="AAA"/>
    <property type="match status" value="1"/>
</dbReference>
<dbReference type="SUPFAM" id="SSF52540">
    <property type="entry name" value="P-loop containing nucleoside triphosphate hydrolases"/>
    <property type="match status" value="1"/>
</dbReference>
<dbReference type="PROSITE" id="PS00211">
    <property type="entry name" value="ABC_TRANSPORTER_1"/>
    <property type="match status" value="1"/>
</dbReference>
<dbReference type="PROSITE" id="PS50893">
    <property type="entry name" value="ABC_TRANSPORTER_2"/>
    <property type="match status" value="1"/>
</dbReference>
<protein>
    <recommendedName>
        <fullName>Putative peptide import ATP-binding protein BMEII0864</fullName>
        <ecNumber>7.4.2.-</ecNumber>
    </recommendedName>
</protein>
<evidence type="ECO:0000250" key="1"/>
<evidence type="ECO:0000255" key="2">
    <source>
        <dbReference type="PROSITE-ProRule" id="PRU00434"/>
    </source>
</evidence>
<evidence type="ECO:0000305" key="3"/>
<keyword id="KW-0067">ATP-binding</keyword>
<keyword id="KW-0997">Cell inner membrane</keyword>
<keyword id="KW-1003">Cell membrane</keyword>
<keyword id="KW-0472">Membrane</keyword>
<keyword id="KW-0547">Nucleotide-binding</keyword>
<keyword id="KW-0571">Peptide transport</keyword>
<keyword id="KW-0653">Protein transport</keyword>
<keyword id="KW-1278">Translocase</keyword>
<keyword id="KW-0813">Transport</keyword>